<keyword id="KW-0002">3D-structure</keyword>
<keyword id="KW-0007">Acetylation</keyword>
<keyword id="KW-0025">Alternative splicing</keyword>
<keyword id="KW-0131">Cell cycle</keyword>
<keyword id="KW-0132">Cell division</keyword>
<keyword id="KW-0137">Centromere</keyword>
<keyword id="KW-0158">Chromosome</keyword>
<keyword id="KW-0963">Cytoplasm</keyword>
<keyword id="KW-0206">Cytoskeleton</keyword>
<keyword id="KW-0995">Kinetochore</keyword>
<keyword id="KW-0498">Mitosis</keyword>
<keyword id="KW-0597">Phosphoprotein</keyword>
<keyword id="KW-1267">Proteomics identification</keyword>
<keyword id="KW-1185">Reference proteome</keyword>
<keyword id="KW-0677">Repeat</keyword>
<accession>Q14008</accession>
<accession>Q05D70</accession>
<accession>Q0VAX7</accession>
<accession>Q0VAX8</accession>
<accession>Q14668</accession>
<accession>Q2TA89</accession>
<accession>Q6NSH4</accession>
<proteinExistence type="evidence at protein level"/>
<gene>
    <name type="primary">CKAP5</name>
    <name type="synonym">KIAA0097</name>
</gene>
<sequence>MGDDSEWLKLPVDQKCEHKLWKARLSGYEEALKIFQKIKDEKSPEWSKFLGLIKKFVTDSNAVVQLKGLEAALVYVENAHVAGKTTGEVVSGVVSKVFNQPKAKAKELGIEICLMYIEIEKGEAVQEELLKGLDNKNPKIIVACIETLRKALSEFGSKIILLKPIIKVLPKLFESREKAVRDEAKLIAVEIYRWIRDALRPPLQNINSVQLKELEEEWVKLPTSAPRPTRFLRSQQELEAKLEQQQSAGGDAEGGGDDGDEVPQIDAYELLEAVEILSKLPKDFYDKIEAKKWQERKEALESVEVLIKNPKLEAGDYADLVKALKKVVGKDTNVMLVALAAKCLTGLAVGLRKKFGQYAGHVVPTILEKFKEKKPQVVQALQEAIDAIFLTTTLQNISEDVLAVMDNKNPTIKQQTSLFIARSFRHCTASTLPKSLLKPFCAALLKHINDSAPEVRDAAFEALGTALKVVGEKAVNPFLADVDKLKLDKIKECSEKVELIHGKKAGLAADKKEFKPLPGRTAASGAAGDKDTKDISAPKPGPLKKAPAAKAGGPPKKGKPAAPGGAGNTGTKNKKGLETKEIVEPELSIEVCEEKASAVLPPTCIQLLDSSNWKERLACMEEFQKAVELMDRTEMPCQALVRMLAKKPGWKETNFQVMQMKLHIVALIAQKGNFSKTSAQVVLDGLVDKIGDVKCGNNAKEAMTAIAEACMLPWTAEQVVSMAFSQKNPKNQSETLNWLSNAIKEFGFSGLNVKAFISNVKTALAATNPAVRTAAITLLGVMYLYVGPSLRMFFEDEKPALLSQIDAEFEKMQGQSPPAPTRGISKHSTSGTDEGEDGDEPDDGSNDVVDLLPRTEISDKITSELVSKIGDKNWKIRKEGLDEVAGIINDAKFIQPNIGELPTALKGRLNDSNKILVQQTLNILQQLAVAMGPNIKQHVKNLGIPIITVLGDSKNNVRAAALATVNAWAEQTGMKEWLEGEDLSEELKKENPFLRQELLGWLAEKLPTLRSTPTDLILCVPHLYSCLEDRNGDVRKKAQDALPFFMMHLGYEKMAKATGKLKPTSKDQVLAMLEKAKVNMPAKPAPPTKATSKPMGGSAPAKFQPASAPAEDCISSSTEPKPDPKKAKAPGLSSKAKSAQGKKMPSKTSLKEDEDKSGPIFIVVPNGKEQRMKDEKGLKVLKWNFTTPRDEYIEQLKTQMSSCVAKWLQDEMFHSDFQHHNKALAVMVDHLESEKEGVIGCLDLILKWLTLRFFDTNTSVLMKALEYLKLLFTLLSEEEYHLTENEASSFIPYLVVKVGEPKDVIRKDVRAILNRMCLVYPASKMFPFIMEGTKSKNSKQRAECLEELGCLVESYGMNVCQPTPGKALKEIAVHIGDRDNAVRNAALNTIVTVYNVHGDQVFKLIGNLSEKDMSMLEERIKRSAKRPSAAPIKQVEEKPQRAQNISSNANMLRKGPAEDMSSKLNQARSMSGHPEAAQMVRREFQLDLDEIENDNGTVRCEMPELVQHKLDDIFEPVLIPEPKIRAVSPHFDDMHSNTASTINFIISQVASGDINTSIQALTQIDEVLRQEDKAEAMSGHIDQFLIATFMQLRLIYNTHMADEKLEKDEIIKLYSCIIGNMISLFQIESLAREASTGVLKDLMHGLITLMLDSRIEDLEEGQQVIRSVNLLVVKVLEKSDQTNILSALLVLLQDSLLATASSPKFSELVMKCLWRMVRLLPDTINSINLDRILLDIHIFMKVFPKEKLKQCKSEFPIRTLKTLLHTLCKLKGPKILDHLTMIDNKNESELEAHLCRMMKHSMDQTGSKSDKETEKGASRIDEKSSKAKVNDFLAEIFKKIGSKENTKEGLAELYEYKKKYSDADIEPFLKNSSQFFQSYVERGLRVIEMEREGKGRISTSTGISPQMEVTCVPTPTSTVSSIGNTNGEEVGPSVYLERLKILRQRCGLDNTKQDDRPPLTSLLSKPAVPTVASSTDMLHSKLSQLRESREQHQHSDLDSNQTHSSGTVTSSSSTANIDDLKKRLERIKSSRK</sequence>
<protein>
    <recommendedName>
        <fullName>Cytoskeleton-associated protein 5</fullName>
    </recommendedName>
    <alternativeName>
        <fullName>Colonic and hepatic tumor overexpressed gene protein</fullName>
        <shortName>Ch-TOG</shortName>
    </alternativeName>
</protein>
<organism>
    <name type="scientific">Homo sapiens</name>
    <name type="common">Human</name>
    <dbReference type="NCBI Taxonomy" id="9606"/>
    <lineage>
        <taxon>Eukaryota</taxon>
        <taxon>Metazoa</taxon>
        <taxon>Chordata</taxon>
        <taxon>Craniata</taxon>
        <taxon>Vertebrata</taxon>
        <taxon>Euteleostomi</taxon>
        <taxon>Mammalia</taxon>
        <taxon>Eutheria</taxon>
        <taxon>Euarchontoglires</taxon>
        <taxon>Primates</taxon>
        <taxon>Haplorrhini</taxon>
        <taxon>Catarrhini</taxon>
        <taxon>Hominidae</taxon>
        <taxon>Homo</taxon>
    </lineage>
</organism>
<name>CKAP5_HUMAN</name>
<reference key="1">
    <citation type="journal article" date="1995" name="Eur. J. Biochem.">
        <title>Characterization of the cDNA and pattern of expression of a new gene over-expressed in human hepatomas and colonic tumors.</title>
        <authorList>
            <person name="Charrasse S."/>
            <person name="Mazel M."/>
            <person name="Taviaux S."/>
            <person name="Berta P."/>
            <person name="Chow T."/>
            <person name="Larroque C."/>
        </authorList>
    </citation>
    <scope>NUCLEOTIDE SEQUENCE [MRNA] (ISOFORM 2)</scope>
    <scope>TISSUE SPECIFICITY</scope>
    <source>
        <tissue>Brain tumor</tissue>
    </source>
</reference>
<reference key="2">
    <citation type="journal article" date="1995" name="DNA Res.">
        <title>Prediction of the coding sequences of unidentified human genes. III. The coding sequences of 40 new genes (KIAA0081-KIAA0120) deduced by analysis of cDNA clones from human cell line KG-1.</title>
        <authorList>
            <person name="Nagase T."/>
            <person name="Miyajima N."/>
            <person name="Tanaka A."/>
            <person name="Sazuka T."/>
            <person name="Seki N."/>
            <person name="Sato S."/>
            <person name="Tabata S."/>
            <person name="Ishikawa K."/>
            <person name="Kawarabayasi Y."/>
            <person name="Kotani H."/>
            <person name="Nomura N."/>
        </authorList>
    </citation>
    <scope>NUCLEOTIDE SEQUENCE [LARGE SCALE MRNA] (ISOFORM 1)</scope>
    <source>
        <tissue>Bone marrow</tissue>
    </source>
</reference>
<reference key="3">
    <citation type="journal article" date="2006" name="Nature">
        <title>Human chromosome 11 DNA sequence and analysis including novel gene identification.</title>
        <authorList>
            <person name="Taylor T.D."/>
            <person name="Noguchi H."/>
            <person name="Totoki Y."/>
            <person name="Toyoda A."/>
            <person name="Kuroki Y."/>
            <person name="Dewar K."/>
            <person name="Lloyd C."/>
            <person name="Itoh T."/>
            <person name="Takeda T."/>
            <person name="Kim D.-W."/>
            <person name="She X."/>
            <person name="Barlow K.F."/>
            <person name="Bloom T."/>
            <person name="Bruford E."/>
            <person name="Chang J.L."/>
            <person name="Cuomo C.A."/>
            <person name="Eichler E."/>
            <person name="FitzGerald M.G."/>
            <person name="Jaffe D.B."/>
            <person name="LaButti K."/>
            <person name="Nicol R."/>
            <person name="Park H.-S."/>
            <person name="Seaman C."/>
            <person name="Sougnez C."/>
            <person name="Yang X."/>
            <person name="Zimmer A.R."/>
            <person name="Zody M.C."/>
            <person name="Birren B.W."/>
            <person name="Nusbaum C."/>
            <person name="Fujiyama A."/>
            <person name="Hattori M."/>
            <person name="Rogers J."/>
            <person name="Lander E.S."/>
            <person name="Sakaki Y."/>
        </authorList>
    </citation>
    <scope>NUCLEOTIDE SEQUENCE [LARGE SCALE GENOMIC DNA]</scope>
</reference>
<reference key="4">
    <citation type="journal article" date="2004" name="Genome Res.">
        <title>The status, quality, and expansion of the NIH full-length cDNA project: the Mammalian Gene Collection (MGC).</title>
        <authorList>
            <consortium name="The MGC Project Team"/>
        </authorList>
    </citation>
    <scope>NUCLEOTIDE SEQUENCE [LARGE SCALE MRNA] (ISOFORMS 1 AND 3)</scope>
    <source>
        <tissue>Uterus</tissue>
    </source>
</reference>
<reference key="5">
    <citation type="journal article" date="1996" name="Neurosci. Lett.">
        <title>Expression of the tumor over-expressed ch-TOG gene in human and baboon brain.</title>
        <authorList>
            <person name="Charrasse S."/>
            <person name="Coubes P."/>
            <person name="Arrancibia S."/>
            <person name="Larroque C."/>
        </authorList>
    </citation>
    <scope>TISSUE SPECIFICITY</scope>
</reference>
<reference key="6">
    <citation type="journal article" date="1998" name="J. Cell Sci.">
        <title>The TOGp protein is a new human microtubule-associated protein homologous to the Xenopus XMAP215.</title>
        <authorList>
            <person name="Charrasse S."/>
            <person name="Schroeder M."/>
            <person name="Gauthier-Rouviere C."/>
            <person name="Ango F."/>
            <person name="Cassimeris L."/>
            <person name="Gard D.L."/>
            <person name="Larroque C."/>
        </authorList>
    </citation>
    <scope>FUNCTION</scope>
    <scope>SUBCELLULAR LOCATION</scope>
</reference>
<reference key="7">
    <citation type="journal article" date="2002" name="Biochem. J.">
        <title>Interaction of the transforming acidic coiled-coil 1 (TACC1) protein with ch-TOG and GAS41/NuBI1 suggests multiple TACC1-containing protein complexes in human cells.</title>
        <authorList>
            <person name="Lauffart B."/>
            <person name="Howell S.J."/>
            <person name="Tasch J.E."/>
            <person name="Cowell J.K."/>
            <person name="Still I.H."/>
        </authorList>
    </citation>
    <scope>INTERACTION WITH TACC1</scope>
</reference>
<reference key="8">
    <citation type="journal article" date="2003" name="Genes Dev.">
        <title>The ch-TOG/XMAP215 protein is essential for spindle pole organization in human somatic cells.</title>
        <authorList>
            <person name="Gergely F."/>
            <person name="Draviam V.M."/>
            <person name="Raff J.W."/>
        </authorList>
    </citation>
    <scope>FUNCTION</scope>
</reference>
<reference key="9">
    <citation type="journal article" date="2003" name="Nature">
        <title>Proteomic characterization of the human centrosome by protein correlation profiling.</title>
        <authorList>
            <person name="Andersen J.S."/>
            <person name="Wilkinson C.J."/>
            <person name="Mayor T."/>
            <person name="Mortensen P."/>
            <person name="Nigg E.A."/>
            <person name="Mann M."/>
        </authorList>
    </citation>
    <scope>IDENTIFICATION BY MASS SPECTROMETRY</scope>
    <scope>SUBCELLULAR LOCATION [LARGE SCALE ANALYSIS]</scope>
    <source>
        <tissue>Lymphoblast</tissue>
    </source>
</reference>
<reference key="10">
    <citation type="journal article" date="2005" name="Mol. Biol. Cell">
        <title>The microtubule-associated protein tumor overexpressed gene binds to the RNA trafficking protein heterogeneous nuclear ribonucleoprotein A2.</title>
        <authorList>
            <person name="Kosturko L.D."/>
            <person name="Maggipinto M.J."/>
            <person name="D'Sa C."/>
            <person name="Carson J.H."/>
            <person name="Barbarese E."/>
        </authorList>
    </citation>
    <scope>INTERACTION WITH HNRNPA2B1</scope>
</reference>
<reference key="11">
    <citation type="journal article" date="2008" name="Mol. Cell. Biol.">
        <title>MCAK-independent functions of ch-Tog/XMAP215 in microtubule plus-end dynamics.</title>
        <authorList>
            <person name="Barr A.R."/>
            <person name="Gergely F."/>
        </authorList>
    </citation>
    <scope>FUNCTION</scope>
</reference>
<reference key="12">
    <citation type="journal article" date="2008" name="Proc. Natl. Acad. Sci. U.S.A.">
        <title>A quantitative atlas of mitotic phosphorylation.</title>
        <authorList>
            <person name="Dephoure N."/>
            <person name="Zhou C."/>
            <person name="Villen J."/>
            <person name="Beausoleil S.A."/>
            <person name="Bakalarski C.E."/>
            <person name="Elledge S.J."/>
            <person name="Gygi S.P."/>
        </authorList>
    </citation>
    <scope>PHOSPHORYLATION [LARGE SCALE ANALYSIS] AT SER-816</scope>
    <scope>IDENTIFICATION BY MASS SPECTROMETRY [LARGE SCALE ANALYSIS]</scope>
    <source>
        <tissue>Cervix carcinoma</tissue>
    </source>
</reference>
<reference key="13">
    <citation type="journal article" date="2009" name="Sci. Signal.">
        <title>Quantitative phosphoproteomic analysis of T cell receptor signaling reveals system-wide modulation of protein-protein interactions.</title>
        <authorList>
            <person name="Mayya V."/>
            <person name="Lundgren D.H."/>
            <person name="Hwang S.-I."/>
            <person name="Rezaul K."/>
            <person name="Wu L."/>
            <person name="Eng J.K."/>
            <person name="Rodionov V."/>
            <person name="Han D.K."/>
        </authorList>
    </citation>
    <scope>IDENTIFICATION BY MASS SPECTROMETRY [LARGE SCALE ANALYSIS]</scope>
    <source>
        <tissue>Leukemic T-cell</tissue>
    </source>
</reference>
<reference key="14">
    <citation type="journal article" date="2009" name="Science">
        <title>Lysine acetylation targets protein complexes and co-regulates major cellular functions.</title>
        <authorList>
            <person name="Choudhary C."/>
            <person name="Kumar C."/>
            <person name="Gnad F."/>
            <person name="Nielsen M.L."/>
            <person name="Rehman M."/>
            <person name="Walther T.C."/>
            <person name="Olsen J.V."/>
            <person name="Mann M."/>
        </authorList>
    </citation>
    <scope>ACETYLATION [LARGE SCALE ANALYSIS] AT LYS-48</scope>
    <scope>IDENTIFICATION BY MASS SPECTROMETRY [LARGE SCALE ANALYSIS]</scope>
</reference>
<reference key="15">
    <citation type="journal article" date="2011" name="BMC Syst. Biol.">
        <title>Initial characterization of the human central proteome.</title>
        <authorList>
            <person name="Burkard T.R."/>
            <person name="Planyavsky M."/>
            <person name="Kaupe I."/>
            <person name="Breitwieser F.P."/>
            <person name="Buerckstuemmer T."/>
            <person name="Bennett K.L."/>
            <person name="Superti-Furga G."/>
            <person name="Colinge J."/>
        </authorList>
    </citation>
    <scope>IDENTIFICATION BY MASS SPECTROMETRY [LARGE SCALE ANALYSIS]</scope>
</reference>
<reference key="16">
    <citation type="journal article" date="2011" name="EMBO J.">
        <title>A TACC3/ch-TOG/clathrin complex stabilises kinetochore fibres by inter-microtubule bridging.</title>
        <authorList>
            <person name="Booth D.G."/>
            <person name="Hood F.E."/>
            <person name="Prior I.A."/>
            <person name="Royle S.J."/>
        </authorList>
    </citation>
    <scope>INTERACTION WITH TACC3 AND CLATHRIN</scope>
    <scope>FUNCTION</scope>
    <scope>SUBCELLULAR LOCATION</scope>
</reference>
<reference key="17">
    <citation type="journal article" date="2011" name="J. Cell Biol.">
        <title>SLAIN2 links microtubule plus end-tracking proteins and controls microtubule growth in interphase.</title>
        <authorList>
            <person name="van der Vaart B."/>
            <person name="Manatschal C."/>
            <person name="Grigoriev I."/>
            <person name="Olieric V."/>
            <person name="Gouveia S.M."/>
            <person name="Bjelic S."/>
            <person name="Demmers J."/>
            <person name="Vorobjev I."/>
            <person name="Hoogenraad C.C."/>
            <person name="Steinmetz M.O."/>
            <person name="Akhmanova A."/>
        </authorList>
    </citation>
    <scope>FUNCTION</scope>
    <scope>INTERACTION WITH SLAIN2 AND SLAIN1</scope>
    <scope>SUBCELLULAR LOCATION</scope>
    <scope>IDENTIFICATION BY MASS SPECTROMETRY</scope>
</reference>
<reference key="18">
    <citation type="journal article" date="2012" name="PLoS ONE">
        <title>Dissecting the nanoscale distributions and functions of microtubule-end-binding proteins EB1 and ch-TOG in interphase HeLa cells.</title>
        <authorList>
            <person name="Nakamura S."/>
            <person name="Grigoriev I."/>
            <person name="Nogi T."/>
            <person name="Hamaji T."/>
            <person name="Cassimeris L."/>
            <person name="Mimori-Kiyosue Y."/>
        </authorList>
    </citation>
    <scope>SUBCELLULAR LOCATION</scope>
</reference>
<reference key="19">
    <citation type="journal article" date="2013" name="J. Cell Sci.">
        <title>Specific removal of TACC3-ch-TOG-clathrin at metaphase deregulates kinetochore fiber tension.</title>
        <authorList>
            <person name="Cheeseman L.P."/>
            <person name="Harry E.F."/>
            <person name="McAinsh A.D."/>
            <person name="Prior I.A."/>
            <person name="Royle S.J."/>
        </authorList>
    </citation>
    <scope>FUNCTION OF THE TACC3/CH-TOG/CLATHRIN COMPLEX</scope>
</reference>
<reference key="20">
    <citation type="journal article" date="2013" name="J. Proteome Res.">
        <title>Toward a comprehensive characterization of a human cancer cell phosphoproteome.</title>
        <authorList>
            <person name="Zhou H."/>
            <person name="Di Palma S."/>
            <person name="Preisinger C."/>
            <person name="Peng M."/>
            <person name="Polat A.N."/>
            <person name="Heck A.J."/>
            <person name="Mohammed S."/>
        </authorList>
    </citation>
    <scope>PHOSPHORYLATION [LARGE SCALE ANALYSIS] AT SER-816; SER-845 AND SER-1469</scope>
    <scope>IDENTIFICATION BY MASS SPECTROMETRY [LARGE SCALE ANALYSIS]</scope>
    <source>
        <tissue>Cervix carcinoma</tissue>
        <tissue>Erythroleukemia</tissue>
    </source>
</reference>
<reference key="21">
    <citation type="journal article" date="2014" name="J. Proteomics">
        <title>An enzyme assisted RP-RPLC approach for in-depth analysis of human liver phosphoproteome.</title>
        <authorList>
            <person name="Bian Y."/>
            <person name="Song C."/>
            <person name="Cheng K."/>
            <person name="Dong M."/>
            <person name="Wang F."/>
            <person name="Huang J."/>
            <person name="Sun D."/>
            <person name="Wang L."/>
            <person name="Ye M."/>
            <person name="Zou H."/>
        </authorList>
    </citation>
    <scope>PHOSPHORYLATION [LARGE SCALE ANALYSIS] AT SER-1861</scope>
    <scope>IDENTIFICATION BY MASS SPECTROMETRY [LARGE SCALE ANALYSIS]</scope>
    <source>
        <tissue>Liver</tissue>
    </source>
</reference>
<reference key="22">
    <citation type="journal article" date="2015" name="Biol. Open">
        <title>TACC3-ch-TOG track the growing tips of microtubules independently of clathrin and Aurora-A phosphorylation.</title>
        <authorList>
            <person name="Gutierrez-Caballero C."/>
            <person name="Burgess S.G."/>
            <person name="Bayliss R."/>
            <person name="Royle S.J."/>
        </authorList>
    </citation>
    <scope>INTERACTION WITH TACC3</scope>
    <scope>SUBCELLULAR LOCATION</scope>
    <scope>MUTAGENESIS OF LEU-1939 AND LEU-1942</scope>
</reference>
<reference key="23">
    <citation type="journal article" date="2016" name="Cell">
        <title>A TOG protein confers tension sensitivity to kinetochore-microtubule attachments.</title>
        <authorList>
            <person name="Miller M.P."/>
            <person name="Asbury C.L."/>
            <person name="Biggins S."/>
        </authorList>
    </citation>
    <scope>FUNCTION</scope>
    <scope>INTERACTION WITH NDC80</scope>
</reference>
<reference key="24">
    <citation type="journal article" date="2014" name="Mol. Biol. Cell">
        <title>The XMAP215 family drives microtubule polymerization using a structurally diverse TOG array.</title>
        <authorList>
            <person name="Fox J.C."/>
            <person name="Howard A.E."/>
            <person name="Currie J.D."/>
            <person name="Rogers S.L."/>
            <person name="Slep K.C."/>
        </authorList>
    </citation>
    <scope>X-RAY CRYSTALLOGRAPHY (1.9 ANGSTROMS) OF 846-1081</scope>
    <scope>TOG DOMAIN</scope>
</reference>
<dbReference type="EMBL" id="X92474">
    <property type="protein sequence ID" value="CAA63212.1"/>
    <property type="molecule type" value="mRNA"/>
</dbReference>
<dbReference type="EMBL" id="D43948">
    <property type="protein sequence ID" value="BAA07892.2"/>
    <property type="status" value="ALT_INIT"/>
    <property type="molecule type" value="mRNA"/>
</dbReference>
<dbReference type="EMBL" id="AC115088">
    <property type="status" value="NOT_ANNOTATED_CDS"/>
    <property type="molecule type" value="Genomic_DNA"/>
</dbReference>
<dbReference type="EMBL" id="BC017856">
    <property type="protein sequence ID" value="AAH17856.1"/>
    <property type="status" value="ALT_SEQ"/>
    <property type="molecule type" value="mRNA"/>
</dbReference>
<dbReference type="EMBL" id="BC070136">
    <property type="protein sequence ID" value="AAH70136.1"/>
    <property type="status" value="ALT_SEQ"/>
    <property type="molecule type" value="mRNA"/>
</dbReference>
<dbReference type="EMBL" id="BC111043">
    <property type="protein sequence ID" value="AAI11044.1"/>
    <property type="status" value="ALT_SEQ"/>
    <property type="molecule type" value="mRNA"/>
</dbReference>
<dbReference type="EMBL" id="BC120869">
    <property type="protein sequence ID" value="AAI20870.1"/>
    <property type="molecule type" value="mRNA"/>
</dbReference>
<dbReference type="EMBL" id="BC120870">
    <property type="protein sequence ID" value="AAI20871.1"/>
    <property type="status" value="ALT_FRAME"/>
    <property type="molecule type" value="mRNA"/>
</dbReference>
<dbReference type="CCDS" id="CCDS31477.1">
    <molecule id="Q14008-1"/>
</dbReference>
<dbReference type="CCDS" id="CCDS7924.1">
    <molecule id="Q14008-2"/>
</dbReference>
<dbReference type="PIR" id="S68176">
    <property type="entry name" value="S68176"/>
</dbReference>
<dbReference type="RefSeq" id="NP_001008938.1">
    <molecule id="Q14008-1"/>
    <property type="nucleotide sequence ID" value="NM_001008938.4"/>
</dbReference>
<dbReference type="RefSeq" id="NP_055571.2">
    <molecule id="Q14008-2"/>
    <property type="nucleotide sequence ID" value="NM_014756.4"/>
</dbReference>
<dbReference type="PDB" id="4QMI">
    <property type="method" value="X-ray"/>
    <property type="resolution" value="1.90 A"/>
    <property type="chains" value="A/B=846-1081"/>
</dbReference>
<dbReference type="PDB" id="4QMJ">
    <property type="method" value="X-ray"/>
    <property type="resolution" value="2.50 A"/>
    <property type="chains" value="A=846-1081"/>
</dbReference>
<dbReference type="PDBsum" id="4QMI"/>
<dbReference type="PDBsum" id="4QMJ"/>
<dbReference type="SMR" id="Q14008"/>
<dbReference type="BioGRID" id="115137">
    <property type="interactions" value="335"/>
</dbReference>
<dbReference type="CORUM" id="Q14008"/>
<dbReference type="FunCoup" id="Q14008">
    <property type="interactions" value="3073"/>
</dbReference>
<dbReference type="IntAct" id="Q14008">
    <property type="interactions" value="166"/>
</dbReference>
<dbReference type="MINT" id="Q14008"/>
<dbReference type="STRING" id="9606.ENSP00000432768"/>
<dbReference type="CarbonylDB" id="Q14008"/>
<dbReference type="GlyCosmos" id="Q14008">
    <property type="glycosylation" value="2 sites, 2 glycans"/>
</dbReference>
<dbReference type="GlyGen" id="Q14008">
    <property type="glycosylation" value="4 sites, 2 O-linked glycans (2 sites)"/>
</dbReference>
<dbReference type="iPTMnet" id="Q14008"/>
<dbReference type="MetOSite" id="Q14008"/>
<dbReference type="PhosphoSitePlus" id="Q14008"/>
<dbReference type="SwissPalm" id="Q14008"/>
<dbReference type="BioMuta" id="CKAP5"/>
<dbReference type="DMDM" id="212276513"/>
<dbReference type="jPOST" id="Q14008"/>
<dbReference type="MassIVE" id="Q14008"/>
<dbReference type="PaxDb" id="9606-ENSP00000432768"/>
<dbReference type="PeptideAtlas" id="Q14008"/>
<dbReference type="ProteomicsDB" id="59791">
    <molecule id="Q14008-1"/>
</dbReference>
<dbReference type="ProteomicsDB" id="59792">
    <molecule id="Q14008-2"/>
</dbReference>
<dbReference type="ProteomicsDB" id="59793">
    <molecule id="Q14008-3"/>
</dbReference>
<dbReference type="Pumba" id="Q14008"/>
<dbReference type="Antibodypedia" id="26445">
    <property type="antibodies" value="150 antibodies from 26 providers"/>
</dbReference>
<dbReference type="DNASU" id="9793"/>
<dbReference type="Ensembl" id="ENST00000312055.9">
    <molecule id="Q14008-2"/>
    <property type="protein sequence ID" value="ENSP00000310227.5"/>
    <property type="gene ID" value="ENSG00000175216.15"/>
</dbReference>
<dbReference type="Ensembl" id="ENST00000354558.7">
    <molecule id="Q14008-2"/>
    <property type="protein sequence ID" value="ENSP00000346566.3"/>
    <property type="gene ID" value="ENSG00000175216.15"/>
</dbReference>
<dbReference type="Ensembl" id="ENST00000529230.6">
    <molecule id="Q14008-1"/>
    <property type="protein sequence ID" value="ENSP00000432768.1"/>
    <property type="gene ID" value="ENSG00000175216.15"/>
</dbReference>
<dbReference type="GeneID" id="9793"/>
<dbReference type="KEGG" id="hsa:9793"/>
<dbReference type="MANE-Select" id="ENST00000529230.6">
    <property type="protein sequence ID" value="ENSP00000432768.1"/>
    <property type="RefSeq nucleotide sequence ID" value="NM_001008938.4"/>
    <property type="RefSeq protein sequence ID" value="NP_001008938.1"/>
</dbReference>
<dbReference type="UCSC" id="uc001ndi.3">
    <molecule id="Q14008-1"/>
    <property type="organism name" value="human"/>
</dbReference>
<dbReference type="AGR" id="HGNC:28959"/>
<dbReference type="CTD" id="9793"/>
<dbReference type="DisGeNET" id="9793"/>
<dbReference type="GeneCards" id="CKAP5"/>
<dbReference type="HGNC" id="HGNC:28959">
    <property type="gene designation" value="CKAP5"/>
</dbReference>
<dbReference type="HPA" id="ENSG00000175216">
    <property type="expression patterns" value="Low tissue specificity"/>
</dbReference>
<dbReference type="MalaCards" id="CKAP5"/>
<dbReference type="MIM" id="611142">
    <property type="type" value="gene"/>
</dbReference>
<dbReference type="neXtProt" id="NX_Q14008"/>
<dbReference type="OpenTargets" id="ENSG00000175216"/>
<dbReference type="PharmGKB" id="PA142672107"/>
<dbReference type="VEuPathDB" id="HostDB:ENSG00000175216"/>
<dbReference type="eggNOG" id="KOG1820">
    <property type="taxonomic scope" value="Eukaryota"/>
</dbReference>
<dbReference type="GeneTree" id="ENSGT00390000014757"/>
<dbReference type="HOGENOM" id="CLU_000539_2_1_1"/>
<dbReference type="InParanoid" id="Q14008"/>
<dbReference type="OMA" id="NWKERKE"/>
<dbReference type="OrthoDB" id="205662at2759"/>
<dbReference type="PAN-GO" id="Q14008">
    <property type="GO annotations" value="10 GO annotations based on evolutionary models"/>
</dbReference>
<dbReference type="PhylomeDB" id="Q14008"/>
<dbReference type="TreeFam" id="TF105639"/>
<dbReference type="PathwayCommons" id="Q14008"/>
<dbReference type="Reactome" id="R-HSA-141444">
    <property type="pathway name" value="Amplification of signal from unattached kinetochores via a MAD2 inhibitory signal"/>
</dbReference>
<dbReference type="Reactome" id="R-HSA-2467813">
    <property type="pathway name" value="Separation of Sister Chromatids"/>
</dbReference>
<dbReference type="Reactome" id="R-HSA-2500257">
    <property type="pathway name" value="Resolution of Sister Chromatid Cohesion"/>
</dbReference>
<dbReference type="Reactome" id="R-HSA-2565942">
    <property type="pathway name" value="Regulation of PLK1 Activity at G2/M Transition"/>
</dbReference>
<dbReference type="Reactome" id="R-HSA-380259">
    <property type="pathway name" value="Loss of Nlp from mitotic centrosomes"/>
</dbReference>
<dbReference type="Reactome" id="R-HSA-380270">
    <property type="pathway name" value="Recruitment of mitotic centrosome proteins and complexes"/>
</dbReference>
<dbReference type="Reactome" id="R-HSA-380284">
    <property type="pathway name" value="Loss of proteins required for interphase microtubule organization from the centrosome"/>
</dbReference>
<dbReference type="Reactome" id="R-HSA-380320">
    <property type="pathway name" value="Recruitment of NuMA to mitotic centrosomes"/>
</dbReference>
<dbReference type="Reactome" id="R-HSA-5620912">
    <property type="pathway name" value="Anchoring of the basal body to the plasma membrane"/>
</dbReference>
<dbReference type="Reactome" id="R-HSA-5663220">
    <property type="pathway name" value="RHO GTPases Activate Formins"/>
</dbReference>
<dbReference type="Reactome" id="R-HSA-68877">
    <property type="pathway name" value="Mitotic Prometaphase"/>
</dbReference>
<dbReference type="Reactome" id="R-HSA-8854518">
    <property type="pathway name" value="AURKA Activation by TPX2"/>
</dbReference>
<dbReference type="Reactome" id="R-HSA-9648025">
    <property type="pathway name" value="EML4 and NUDC in mitotic spindle formation"/>
</dbReference>
<dbReference type="SignaLink" id="Q14008"/>
<dbReference type="BioGRID-ORCS" id="9793">
    <property type="hits" value="823 hits in 1163 CRISPR screens"/>
</dbReference>
<dbReference type="CD-CODE" id="8C2F96ED">
    <property type="entry name" value="Centrosome"/>
</dbReference>
<dbReference type="CD-CODE" id="91857CE7">
    <property type="entry name" value="Nucleolus"/>
</dbReference>
<dbReference type="CD-CODE" id="FB4E32DD">
    <property type="entry name" value="Presynaptic clusters and postsynaptic densities"/>
</dbReference>
<dbReference type="ChiTaRS" id="CKAP5">
    <property type="organism name" value="human"/>
</dbReference>
<dbReference type="EvolutionaryTrace" id="Q14008"/>
<dbReference type="GeneWiki" id="CKAP5"/>
<dbReference type="GenomeRNAi" id="9793"/>
<dbReference type="Pharos" id="Q14008">
    <property type="development level" value="Tbio"/>
</dbReference>
<dbReference type="PRO" id="PR:Q14008"/>
<dbReference type="Proteomes" id="UP000005640">
    <property type="component" value="Chromosome 11"/>
</dbReference>
<dbReference type="RNAct" id="Q14008">
    <property type="molecule type" value="protein"/>
</dbReference>
<dbReference type="Bgee" id="ENSG00000175216">
    <property type="expression patterns" value="Expressed in ventricular zone and 216 other cell types or tissues"/>
</dbReference>
<dbReference type="ExpressionAtlas" id="Q14008">
    <property type="expression patterns" value="baseline and differential"/>
</dbReference>
<dbReference type="GO" id="GO:0005813">
    <property type="term" value="C:centrosome"/>
    <property type="evidence" value="ECO:0000314"/>
    <property type="project" value="HPA"/>
</dbReference>
<dbReference type="GO" id="GO:0036064">
    <property type="term" value="C:ciliary basal body"/>
    <property type="evidence" value="ECO:0000314"/>
    <property type="project" value="HPA"/>
</dbReference>
<dbReference type="GO" id="GO:0005929">
    <property type="term" value="C:cilium"/>
    <property type="evidence" value="ECO:0000314"/>
    <property type="project" value="HPA"/>
</dbReference>
<dbReference type="GO" id="GO:0005737">
    <property type="term" value="C:cytoplasm"/>
    <property type="evidence" value="ECO:0000314"/>
    <property type="project" value="MGI"/>
</dbReference>
<dbReference type="GO" id="GO:0005829">
    <property type="term" value="C:cytosol"/>
    <property type="evidence" value="ECO:0000304"/>
    <property type="project" value="Reactome"/>
</dbReference>
<dbReference type="GO" id="GO:0000776">
    <property type="term" value="C:kinetochore"/>
    <property type="evidence" value="ECO:0000314"/>
    <property type="project" value="UniProtKB"/>
</dbReference>
<dbReference type="GO" id="GO:0016020">
    <property type="term" value="C:membrane"/>
    <property type="evidence" value="ECO:0007005"/>
    <property type="project" value="UniProtKB"/>
</dbReference>
<dbReference type="GO" id="GO:0072686">
    <property type="term" value="C:mitotic spindle"/>
    <property type="evidence" value="ECO:0000314"/>
    <property type="project" value="HPA"/>
</dbReference>
<dbReference type="GO" id="GO:0005730">
    <property type="term" value="C:nucleolus"/>
    <property type="evidence" value="ECO:0000314"/>
    <property type="project" value="HPA"/>
</dbReference>
<dbReference type="GO" id="GO:0005886">
    <property type="term" value="C:plasma membrane"/>
    <property type="evidence" value="ECO:0000314"/>
    <property type="project" value="HPA"/>
</dbReference>
<dbReference type="GO" id="GO:0032991">
    <property type="term" value="C:protein-containing complex"/>
    <property type="evidence" value="ECO:0000314"/>
    <property type="project" value="MGI"/>
</dbReference>
<dbReference type="GO" id="GO:0000922">
    <property type="term" value="C:spindle pole"/>
    <property type="evidence" value="ECO:0000314"/>
    <property type="project" value="UniProtKB"/>
</dbReference>
<dbReference type="GO" id="GO:0045296">
    <property type="term" value="F:cadherin binding"/>
    <property type="evidence" value="ECO:0007005"/>
    <property type="project" value="BHF-UCL"/>
</dbReference>
<dbReference type="GO" id="GO:0008017">
    <property type="term" value="F:microtubule binding"/>
    <property type="evidence" value="ECO:0000314"/>
    <property type="project" value="MGI"/>
</dbReference>
<dbReference type="GO" id="GO:0061863">
    <property type="term" value="F:microtubule plus end polymerase"/>
    <property type="evidence" value="ECO:0000318"/>
    <property type="project" value="GO_Central"/>
</dbReference>
<dbReference type="GO" id="GO:0051010">
    <property type="term" value="F:microtubule plus-end binding"/>
    <property type="evidence" value="ECO:0007669"/>
    <property type="project" value="InterPro"/>
</dbReference>
<dbReference type="GO" id="GO:0043021">
    <property type="term" value="F:ribonucleoprotein complex binding"/>
    <property type="evidence" value="ECO:0000314"/>
    <property type="project" value="MGI"/>
</dbReference>
<dbReference type="GO" id="GO:0051301">
    <property type="term" value="P:cell division"/>
    <property type="evidence" value="ECO:0007669"/>
    <property type="project" value="UniProtKB-KW"/>
</dbReference>
<dbReference type="GO" id="GO:0007098">
    <property type="term" value="P:centrosome cycle"/>
    <property type="evidence" value="ECO:0000315"/>
    <property type="project" value="HGNC-UCL"/>
</dbReference>
<dbReference type="GO" id="GO:0051298">
    <property type="term" value="P:centrosome duplication"/>
    <property type="evidence" value="ECO:0000318"/>
    <property type="project" value="GO_Central"/>
</dbReference>
<dbReference type="GO" id="GO:0030951">
    <property type="term" value="P:establishment or maintenance of microtubule cytoskeleton polarity"/>
    <property type="evidence" value="ECO:0000315"/>
    <property type="project" value="HGNC-UCL"/>
</dbReference>
<dbReference type="GO" id="GO:0007019">
    <property type="term" value="P:microtubule depolymerization"/>
    <property type="evidence" value="ECO:0000304"/>
    <property type="project" value="ARUK-UCL"/>
</dbReference>
<dbReference type="GO" id="GO:0046785">
    <property type="term" value="P:microtubule polymerization"/>
    <property type="evidence" value="ECO:0000318"/>
    <property type="project" value="GO_Central"/>
</dbReference>
<dbReference type="GO" id="GO:0007052">
    <property type="term" value="P:mitotic spindle organization"/>
    <property type="evidence" value="ECO:0000318"/>
    <property type="project" value="GO_Central"/>
</dbReference>
<dbReference type="GO" id="GO:0090063">
    <property type="term" value="P:positive regulation of microtubule nucleation"/>
    <property type="evidence" value="ECO:0000314"/>
    <property type="project" value="CACAO"/>
</dbReference>
<dbReference type="GO" id="GO:0050658">
    <property type="term" value="P:RNA transport"/>
    <property type="evidence" value="ECO:0000250"/>
    <property type="project" value="HGNC-UCL"/>
</dbReference>
<dbReference type="GO" id="GO:0007051">
    <property type="term" value="P:spindle organization"/>
    <property type="evidence" value="ECO:0000315"/>
    <property type="project" value="UniProtKB"/>
</dbReference>
<dbReference type="FunFam" id="1.25.10.10:FF:000052">
    <property type="entry name" value="Cytoskeleton associated protein 5"/>
    <property type="match status" value="1"/>
</dbReference>
<dbReference type="FunFam" id="1.25.10.10:FF:000019">
    <property type="entry name" value="Cytoskeleton-associated protein 5"/>
    <property type="match status" value="1"/>
</dbReference>
<dbReference type="FunFam" id="1.25.10.10:FF:000050">
    <property type="entry name" value="Cytoskeleton-associated protein 5 isoform X1"/>
    <property type="match status" value="1"/>
</dbReference>
<dbReference type="FunFam" id="1.25.10.10:FF:000068">
    <property type="entry name" value="cytoskeleton-associated protein 5 isoform X1"/>
    <property type="match status" value="1"/>
</dbReference>
<dbReference type="FunFam" id="1.25.10.10:FF:000063">
    <property type="entry name" value="Putative cytoskeleton-associated protein 5"/>
    <property type="match status" value="1"/>
</dbReference>
<dbReference type="Gene3D" id="1.25.10.10">
    <property type="entry name" value="Leucine-rich Repeat Variant"/>
    <property type="match status" value="5"/>
</dbReference>
<dbReference type="InterPro" id="IPR011989">
    <property type="entry name" value="ARM-like"/>
</dbReference>
<dbReference type="InterPro" id="IPR016024">
    <property type="entry name" value="ARM-type_fold"/>
</dbReference>
<dbReference type="InterPro" id="IPR024395">
    <property type="entry name" value="CLASP_N_dom"/>
</dbReference>
<dbReference type="InterPro" id="IPR021133">
    <property type="entry name" value="HEAT_type_2"/>
</dbReference>
<dbReference type="InterPro" id="IPR034085">
    <property type="entry name" value="TOG"/>
</dbReference>
<dbReference type="InterPro" id="IPR045110">
    <property type="entry name" value="XMAP215"/>
</dbReference>
<dbReference type="InterPro" id="IPR048491">
    <property type="entry name" value="XMAP215_CLASP_TOG"/>
</dbReference>
<dbReference type="PANTHER" id="PTHR12609">
    <property type="entry name" value="MICROTUBULE ASSOCIATED PROTEIN XMAP215"/>
    <property type="match status" value="1"/>
</dbReference>
<dbReference type="Pfam" id="PF12348">
    <property type="entry name" value="CLASP_N"/>
    <property type="match status" value="1"/>
</dbReference>
<dbReference type="Pfam" id="PF21041">
    <property type="entry name" value="XMAP215_CLASP_TOG"/>
    <property type="match status" value="4"/>
</dbReference>
<dbReference type="SMART" id="SM01349">
    <property type="entry name" value="TOG"/>
    <property type="match status" value="5"/>
</dbReference>
<dbReference type="SUPFAM" id="SSF48371">
    <property type="entry name" value="ARM repeat"/>
    <property type="match status" value="2"/>
</dbReference>
<dbReference type="PROSITE" id="PS50077">
    <property type="entry name" value="HEAT_REPEAT"/>
    <property type="match status" value="1"/>
</dbReference>
<comment type="function">
    <text evidence="3 6 7 8 10 12 15">Binds to the plus end of microtubules and regulates microtubule dynamics and microtubule organization. Acts as a processive microtubule polymerase. Promotes cytoplasmic microtubule nucleation and elongation. Plays a major role in organizing spindle poles. In spindle formation protects kinetochore microtubules from depolymerization by KIF2C and has an essential role in centrosomal microtubule assembly independently of KIF2C activity. Contributes to centrosome integrity. Acts as a component of the TACC3/ch-TOG/clathrin complex proposed to contribute to stabilization of kinetochore fibers of the mitotic spindle by acting as inter-microtubule bridge. The TACC3/ch-TOG/clathrin complex is required for the maintenance of kinetochore fiber tension (PubMed:23532825). Enhances the strength of NDC80 complex-mediated kinetochore-tip microtubule attachments (PubMed:27156448).</text>
</comment>
<comment type="subunit">
    <text evidence="2 5 7 8 10 11 12">Interacts with TACC1 (PubMed:11903063). Interacts with SLAIN2 and SLAIN1 (PubMed:21646404). Interacts with HNRNPA2B1 (PubMed:15703215). Interacts with TACC3 independently of clathrin (PubMed:25596274). Interacts with TACC3 and clathrin forming the TACC3/ch-TOG/clathrin complex located at spindle inter-microtubules bridges (PubMed:21297582, PubMed:23532825). Interacts with NDC80; indicative for an association with the NDC80 complex (PubMed:27156448).</text>
</comment>
<comment type="interaction">
    <interactant intactId="EBI-310585">
        <id>Q14008</id>
    </interactant>
    <interactant intactId="EBI-389883">
        <id>P16333</id>
        <label>NCK1</label>
    </interactant>
    <organismsDiffer>false</organismsDiffer>
    <experiments>3</experiments>
</comment>
<comment type="interaction">
    <interactant intactId="EBI-310585">
        <id>Q14008</id>
    </interactant>
    <interactant intactId="EBI-3959887">
        <id>Q9P270</id>
        <label>SLAIN2</label>
    </interactant>
    <organismsDiffer>false</organismsDiffer>
    <experiments>7</experiments>
</comment>
<comment type="interaction">
    <interactant intactId="EBI-310585">
        <id>Q14008</id>
    </interactant>
    <interactant intactId="EBI-624237">
        <id>O75410</id>
        <label>TACC1</label>
    </interactant>
    <organismsDiffer>false</organismsDiffer>
    <experiments>6</experiments>
</comment>
<comment type="interaction">
    <interactant intactId="EBI-310585">
        <id>Q14008</id>
    </interactant>
    <interactant intactId="EBI-624252">
        <id>O75410-1</id>
        <label>TACC1</label>
    </interactant>
    <organismsDiffer>false</organismsDiffer>
    <experiments>3</experiments>
</comment>
<comment type="interaction">
    <interactant intactId="EBI-310585">
        <id>Q14008</id>
    </interactant>
    <interactant intactId="EBI-624278">
        <id>O75410-6</id>
        <label>TACC1</label>
    </interactant>
    <organismsDiffer>false</organismsDiffer>
    <experiments>2</experiments>
</comment>
<comment type="interaction">
    <interactant intactId="EBI-310585">
        <id>Q14008</id>
    </interactant>
    <interactant intactId="EBI-2554984">
        <id>Q9Y6A5</id>
        <label>TACC3</label>
    </interactant>
    <organismsDiffer>false</organismsDiffer>
    <experiments>10</experiments>
</comment>
<comment type="subcellular location">
    <subcellularLocation>
        <location evidence="4 8 11 15">Cytoplasm</location>
        <location evidence="4 8 11 15">Cytoskeleton</location>
        <location evidence="4 8 11 15">Microtubule organizing center</location>
        <location evidence="4 8 11 15">Centrosome</location>
    </subcellularLocation>
    <subcellularLocation>
        <location evidence="8">Cytoplasm</location>
        <location evidence="8">Cytoskeleton</location>
        <location evidence="8">Spindle pole</location>
    </subcellularLocation>
    <subcellularLocation>
        <location evidence="7 11 15">Cytoplasm</location>
        <location evidence="7 11 15">Cytoskeleton</location>
        <location evidence="7 11 15">Spindle</location>
    </subcellularLocation>
    <subcellularLocation>
        <location evidence="11">Chromosome</location>
        <location evidence="11">Centromere</location>
        <location evidence="11">Kinetochore</location>
    </subcellularLocation>
    <text evidence="8 9 11">Detected on centrosomes and kinetochores during interphase and mitosis independently from TACC3 and clathrin. Located to spindle poles and microtubules during mitosis. In complex with TACC3 localized to microtubule plus-ends in mitosis and interphase. In complex with TACC3 and clathrin localized to inter-microtubule bridges in mitotic spindles. Accumulation sites at microtubule plus ends protruded approximately 100 nm from MAPRE1/EB1 sites in interphase cells.</text>
</comment>
<comment type="alternative products">
    <event type="alternative splicing"/>
    <isoform>
        <id>Q14008-1</id>
        <name>1</name>
        <sequence type="displayed"/>
    </isoform>
    <isoform>
        <id>Q14008-2</id>
        <name>2</name>
        <sequence type="described" ref="VSP_035668"/>
    </isoform>
    <isoform>
        <id>Q14008-3</id>
        <name>3</name>
        <sequence type="described" ref="VSP_036400"/>
    </isoform>
</comment>
<comment type="tissue specificity">
    <text evidence="13 14">Overexpressed in hepatomas and colonic tumors. Also expressed in skeletal muscle, brain, heart, placenta, lung, liver, kidney and pancreas. Expression is elevated in the brain; highly expressed in the Purkinje cell bodies of the cerebellum.</text>
</comment>
<comment type="domain">
    <text evidence="19">The TOG (tumor overexpressed gene) domains are arranged in a N-terminal pentameric array with each domain composed of six (for the most part non-canonical) HEAT repeats forming a oblong paddle-like structure. Intra-HEAT loops are positioned along a face of the TOG domain and bind to a single alpha/beta-tubulin heterodimer. The TOG domains in the array seem to be structurally and functionally polarized. Differential functions may range from microtubule (MT) lattice binding and/or free tubulin heterodimer binding to potentiating stable incorporation of tubulin into the MT lattice.</text>
</comment>
<comment type="similarity">
    <text evidence="18">Belongs to the TOG/XMAP215 family.</text>
</comment>
<comment type="sequence caution" evidence="18">
    <conflict type="miscellaneous discrepancy">
        <sequence resource="EMBL-CDS" id="AAH17856"/>
    </conflict>
    <text>Contaminating sequence. Potential poly-A sequence.</text>
</comment>
<comment type="sequence caution" evidence="18">
    <conflict type="miscellaneous discrepancy">
        <sequence resource="EMBL-CDS" id="AAH70136"/>
    </conflict>
    <text>Contaminating sequence. Potential poly-A sequence.</text>
</comment>
<comment type="sequence caution" evidence="18">
    <conflict type="miscellaneous discrepancy">
        <sequence resource="EMBL-CDS" id="AAI11044"/>
    </conflict>
    <text>Contaminating sequence. Potential poly-A sequence.</text>
</comment>
<comment type="sequence caution" evidence="18">
    <conflict type="frameshift">
        <sequence resource="EMBL-CDS" id="AAI20871"/>
    </conflict>
</comment>
<comment type="sequence caution" evidence="18">
    <conflict type="erroneous initiation">
        <sequence resource="EMBL-CDS" id="BAA07892"/>
    </conflict>
</comment>
<feature type="chain" id="PRO_0000089663" description="Cytoskeleton-associated protein 5">
    <location>
        <begin position="1"/>
        <end position="2032"/>
    </location>
</feature>
<feature type="repeat" description="HEAT 1">
    <location>
        <begin position="159"/>
        <end position="197"/>
    </location>
</feature>
<feature type="repeat" description="HEAT 2">
    <location>
        <begin position="356"/>
        <end position="394"/>
    </location>
</feature>
<feature type="repeat" description="HEAT 3">
    <location>
        <begin position="434"/>
        <end position="472"/>
    </location>
</feature>
<feature type="repeat" description="HEAT 4">
    <location>
        <begin position="750"/>
        <end position="788"/>
    </location>
</feature>
<feature type="repeat" description="HEAT 5">
    <location>
        <begin position="855"/>
        <end position="893"/>
    </location>
</feature>
<feature type="repeat" description="HEAT 6">
    <location>
        <begin position="936"/>
        <end position="974"/>
    </location>
</feature>
<feature type="repeat" description="HEAT 7">
    <location>
        <begin position="1013"/>
        <end position="1051"/>
    </location>
</feature>
<feature type="repeat" description="HEAT 8">
    <location>
        <begin position="1284"/>
        <end position="1322"/>
    </location>
</feature>
<feature type="repeat" description="HEAT 9">
    <location>
        <begin position="1324"/>
        <end position="1357"/>
    </location>
</feature>
<feature type="repeat" description="HEAT 10">
    <location>
        <begin position="1361"/>
        <end position="1399"/>
    </location>
</feature>
<feature type="region of interest" description="TOG 1" evidence="19">
    <location>
        <begin position="1"/>
        <end position="223"/>
    </location>
</feature>
<feature type="region of interest" description="TOG 2" evidence="19">
    <location>
        <begin position="268"/>
        <end position="502"/>
    </location>
</feature>
<feature type="region of interest" description="Disordered" evidence="1">
    <location>
        <begin position="516"/>
        <end position="579"/>
    </location>
</feature>
<feature type="region of interest" description="TOG 3" evidence="19">
    <location>
        <begin position="588"/>
        <end position="817"/>
    </location>
</feature>
<feature type="region of interest" description="Disordered" evidence="1">
    <location>
        <begin position="811"/>
        <end position="851"/>
    </location>
</feature>
<feature type="region of interest" description="TOG 4" evidence="19">
    <location>
        <begin position="853"/>
        <end position="1081"/>
    </location>
</feature>
<feature type="region of interest" description="Disordered" evidence="1">
    <location>
        <begin position="1077"/>
        <end position="1160"/>
    </location>
</feature>
<feature type="region of interest" description="TOG 5" evidence="19">
    <location>
        <begin position="1193"/>
        <end position="1428"/>
    </location>
</feature>
<feature type="region of interest" description="Disordered" evidence="1">
    <location>
        <begin position="1422"/>
        <end position="1443"/>
    </location>
</feature>
<feature type="region of interest" description="Disordered" evidence="1">
    <location>
        <begin position="1801"/>
        <end position="1822"/>
    </location>
</feature>
<feature type="region of interest" description="Interaction with TACC3" evidence="11">
    <location>
        <begin position="1932"/>
        <end position="1957"/>
    </location>
</feature>
<feature type="region of interest" description="Disordered" evidence="1">
    <location>
        <begin position="1949"/>
        <end position="2032"/>
    </location>
</feature>
<feature type="compositionally biased region" description="Low complexity" evidence="1">
    <location>
        <begin position="543"/>
        <end position="554"/>
    </location>
</feature>
<feature type="compositionally biased region" description="Acidic residues" evidence="1">
    <location>
        <begin position="833"/>
        <end position="845"/>
    </location>
</feature>
<feature type="compositionally biased region" description="Basic and acidic residues" evidence="1">
    <location>
        <begin position="1808"/>
        <end position="1822"/>
    </location>
</feature>
<feature type="compositionally biased region" description="Polar residues" evidence="1">
    <location>
        <begin position="1971"/>
        <end position="1983"/>
    </location>
</feature>
<feature type="compositionally biased region" description="Basic and acidic residues" evidence="1">
    <location>
        <begin position="1984"/>
        <end position="1997"/>
    </location>
</feature>
<feature type="compositionally biased region" description="Low complexity" evidence="1">
    <location>
        <begin position="2002"/>
        <end position="2014"/>
    </location>
</feature>
<feature type="compositionally biased region" description="Basic and acidic residues" evidence="1">
    <location>
        <begin position="2018"/>
        <end position="2032"/>
    </location>
</feature>
<feature type="modified residue" description="N6-acetyllysine" evidence="21">
    <location>
        <position position="48"/>
    </location>
</feature>
<feature type="modified residue" description="Phosphoserine" evidence="20 22">
    <location>
        <position position="816"/>
    </location>
</feature>
<feature type="modified residue" description="Phosphoserine" evidence="22">
    <location>
        <position position="845"/>
    </location>
</feature>
<feature type="modified residue" description="Phosphoserine" evidence="22">
    <location>
        <position position="1469"/>
    </location>
</feature>
<feature type="modified residue" description="Phosphoserine" evidence="23">
    <location>
        <position position="1861"/>
    </location>
</feature>
<feature type="splice variant" id="VSP_035668" description="In isoform 2." evidence="17">
    <location>
        <begin position="1564"/>
        <end position="1623"/>
    </location>
</feature>
<feature type="splice variant" id="VSP_036400" description="In isoform 3." evidence="16">
    <original>K</original>
    <variation>KSCMCLPQ</variation>
    <location>
        <position position="1774"/>
    </location>
</feature>
<feature type="sequence variant" id="VAR_045627" description="In dbSNP:rs11038988.">
    <original>Y</original>
    <variation>C</variation>
    <location>
        <position position="785"/>
    </location>
</feature>
<feature type="mutagenesis site" description="Disrupts interaction with TACC3." evidence="11">
    <original>L</original>
    <variation>A</variation>
    <variation>R</variation>
    <location>
        <position position="1939"/>
    </location>
</feature>
<feature type="mutagenesis site" description="Abolishes localization to spindle microtubules, no effect on localization to centrosomes and kinetochores; when associated with A-1942." evidence="11">
    <original>L</original>
    <variation>A</variation>
    <location>
        <position position="1939"/>
    </location>
</feature>
<feature type="mutagenesis site" description="Disrupts interaction with TACC3." evidence="11">
    <original>L</original>
    <variation>A</variation>
    <variation>R</variation>
    <location>
        <position position="1942"/>
    </location>
</feature>
<feature type="mutagenesis site" description="Abolishes localization to spindle microtubules, no effect on localization to centrosomes and kinetochores; when associated with A-1939." evidence="11">
    <original>L</original>
    <variation>A</variation>
    <location>
        <position position="1942"/>
    </location>
</feature>
<feature type="sequence conflict" description="In Ref. 1; CAA63212 and 2; BAA07892." evidence="18" ref="1 2">
    <original>N</original>
    <variation>K</variation>
    <location>
        <position position="476"/>
    </location>
</feature>
<feature type="sequence conflict" description="In Ref. 1; CAA63212." evidence="18" ref="1">
    <original>E</original>
    <variation>A</variation>
    <location>
        <position position="1814"/>
    </location>
</feature>
<feature type="sequence conflict" description="In Ref. 1; CAA63212." evidence="18" ref="1">
    <original>E</original>
    <variation>A</variation>
    <location>
        <position position="1822"/>
    </location>
</feature>
<feature type="helix" evidence="24">
    <location>
        <begin position="858"/>
        <end position="860"/>
    </location>
</feature>
<feature type="helix" evidence="24">
    <location>
        <begin position="863"/>
        <end position="869"/>
    </location>
</feature>
<feature type="helix" evidence="24">
    <location>
        <begin position="874"/>
        <end position="891"/>
    </location>
</feature>
<feature type="strand" evidence="24">
    <location>
        <begin position="892"/>
        <end position="894"/>
    </location>
</feature>
<feature type="helix" evidence="24">
    <location>
        <begin position="901"/>
        <end position="906"/>
    </location>
</feature>
<feature type="turn" evidence="24">
    <location>
        <begin position="907"/>
        <end position="910"/>
    </location>
</feature>
<feature type="helix" evidence="24">
    <location>
        <begin position="914"/>
        <end position="931"/>
    </location>
</feature>
<feature type="helix" evidence="24">
    <location>
        <begin position="932"/>
        <end position="938"/>
    </location>
</feature>
<feature type="turn" evidence="24">
    <location>
        <begin position="939"/>
        <end position="942"/>
    </location>
</feature>
<feature type="helix" evidence="24">
    <location>
        <begin position="943"/>
        <end position="948"/>
    </location>
</feature>
<feature type="helix" evidence="24">
    <location>
        <begin position="949"/>
        <end position="951"/>
    </location>
</feature>
<feature type="helix" evidence="24">
    <location>
        <begin position="955"/>
        <end position="972"/>
    </location>
</feature>
<feature type="helix" evidence="24">
    <location>
        <begin position="975"/>
        <end position="978"/>
    </location>
</feature>
<feature type="strand" evidence="24">
    <location>
        <begin position="979"/>
        <end position="981"/>
    </location>
</feature>
<feature type="helix" evidence="24">
    <location>
        <begin position="982"/>
        <end position="987"/>
    </location>
</feature>
<feature type="helix" evidence="24">
    <location>
        <begin position="992"/>
        <end position="1005"/>
    </location>
</feature>
<feature type="helix" evidence="24">
    <location>
        <begin position="1006"/>
        <end position="1008"/>
    </location>
</feature>
<feature type="helix" evidence="24">
    <location>
        <begin position="1016"/>
        <end position="1019"/>
    </location>
</feature>
<feature type="helix" evidence="24">
    <location>
        <begin position="1020"/>
        <end position="1027"/>
    </location>
</feature>
<feature type="helix" evidence="24">
    <location>
        <begin position="1032"/>
        <end position="1049"/>
    </location>
</feature>
<feature type="helix" evidence="24">
    <location>
        <begin position="1051"/>
        <end position="1056"/>
    </location>
</feature>
<feature type="helix" evidence="24">
    <location>
        <begin position="1057"/>
        <end position="1060"/>
    </location>
</feature>
<feature type="helix" evidence="24">
    <location>
        <begin position="1063"/>
        <end position="1076"/>
    </location>
</feature>
<feature type="helix" evidence="24">
    <location>
        <begin position="1077"/>
        <end position="1079"/>
    </location>
</feature>
<evidence type="ECO:0000256" key="1">
    <source>
        <dbReference type="SAM" id="MobiDB-lite"/>
    </source>
</evidence>
<evidence type="ECO:0000269" key="2">
    <source>
    </source>
</evidence>
<evidence type="ECO:0000269" key="3">
    <source>
    </source>
</evidence>
<evidence type="ECO:0000269" key="4">
    <source>
    </source>
</evidence>
<evidence type="ECO:0000269" key="5">
    <source>
    </source>
</evidence>
<evidence type="ECO:0000269" key="6">
    <source>
    </source>
</evidence>
<evidence type="ECO:0000269" key="7">
    <source>
    </source>
</evidence>
<evidence type="ECO:0000269" key="8">
    <source>
    </source>
</evidence>
<evidence type="ECO:0000269" key="9">
    <source>
    </source>
</evidence>
<evidence type="ECO:0000269" key="10">
    <source>
    </source>
</evidence>
<evidence type="ECO:0000269" key="11">
    <source>
    </source>
</evidence>
<evidence type="ECO:0000269" key="12">
    <source>
    </source>
</evidence>
<evidence type="ECO:0000269" key="13">
    <source>
    </source>
</evidence>
<evidence type="ECO:0000269" key="14">
    <source>
    </source>
</evidence>
<evidence type="ECO:0000269" key="15">
    <source>
    </source>
</evidence>
<evidence type="ECO:0000303" key="16">
    <source>
    </source>
</evidence>
<evidence type="ECO:0000303" key="17">
    <source>
    </source>
</evidence>
<evidence type="ECO:0000305" key="18"/>
<evidence type="ECO:0000305" key="19">
    <source>
    </source>
</evidence>
<evidence type="ECO:0007744" key="20">
    <source>
    </source>
</evidence>
<evidence type="ECO:0007744" key="21">
    <source>
    </source>
</evidence>
<evidence type="ECO:0007744" key="22">
    <source>
    </source>
</evidence>
<evidence type="ECO:0007744" key="23">
    <source>
    </source>
</evidence>
<evidence type="ECO:0007829" key="24">
    <source>
        <dbReference type="PDB" id="4QMI"/>
    </source>
</evidence>